<sequence length="427" mass="45315">MNRNEILFDRAKAIIPGGVNSPVRAFGSVGGVPRFIKKAEGAYVWDENGTRYTDYVGSWGPAIVGHAHPEVVETVCEAALGGLSFGAPTEGEIVIAEEIAKIMPSVERLRLVSSGTEATMTAIRLARGFTGRDKIIKFEGCYHGHSDSLLVKAGSGLLTFGNPSSAGVPADFTKHTLVLEYNNIAQLEEAFAQSGNEIACVIVEPFVGNMNLVRPTEAFVKALRGLTEKYGAVLIYDEVMTGFRVALGGAQSLHGITPDLTTMGKVIGGGMPLAAFGGRKDIMECISPLGGVYQAGTLSGNPIAVAAGLKTLEIIQREGFYENLTARTEQLVQGFRTAADAAGIEFTADSVGGMFGLYFAAHAPRNYADMARSNIEGFKQFFHGMLDRNVAFGPSAYEAGFVSAAHTPELIDETVAVAVEVFKAMAE</sequence>
<feature type="chain" id="PRO_0000120428" description="Glutamate-1-semialdehyde 2,1-aminomutase">
    <location>
        <begin position="1"/>
        <end position="427"/>
    </location>
</feature>
<feature type="modified residue" description="N6-(pyridoxal phosphate)lysine" evidence="1">
    <location>
        <position position="265"/>
    </location>
</feature>
<protein>
    <recommendedName>
        <fullName evidence="1">Glutamate-1-semialdehyde 2,1-aminomutase</fullName>
        <shortName evidence="1">GSA</shortName>
        <ecNumber evidence="1">5.4.3.8</ecNumber>
    </recommendedName>
    <alternativeName>
        <fullName evidence="1">Glutamate-1-semialdehyde aminotransferase</fullName>
        <shortName evidence="1">GSA-AT</shortName>
    </alternativeName>
</protein>
<proteinExistence type="inferred from homology"/>
<organism>
    <name type="scientific">Neisseria meningitidis serogroup B (strain ATCC BAA-335 / MC58)</name>
    <dbReference type="NCBI Taxonomy" id="122586"/>
    <lineage>
        <taxon>Bacteria</taxon>
        <taxon>Pseudomonadati</taxon>
        <taxon>Pseudomonadota</taxon>
        <taxon>Betaproteobacteria</taxon>
        <taxon>Neisseriales</taxon>
        <taxon>Neisseriaceae</taxon>
        <taxon>Neisseria</taxon>
    </lineage>
</organism>
<gene>
    <name evidence="1" type="primary">hemL</name>
    <name type="ordered locus">NMB1864</name>
</gene>
<name>GSA_NEIMB</name>
<comment type="catalytic activity">
    <reaction evidence="1">
        <text>(S)-4-amino-5-oxopentanoate = 5-aminolevulinate</text>
        <dbReference type="Rhea" id="RHEA:14265"/>
        <dbReference type="ChEBI" id="CHEBI:57501"/>
        <dbReference type="ChEBI" id="CHEBI:356416"/>
        <dbReference type="EC" id="5.4.3.8"/>
    </reaction>
</comment>
<comment type="cofactor">
    <cofactor evidence="1">
        <name>pyridoxal 5'-phosphate</name>
        <dbReference type="ChEBI" id="CHEBI:597326"/>
    </cofactor>
</comment>
<comment type="pathway">
    <text evidence="1">Porphyrin-containing compound metabolism; protoporphyrin-IX biosynthesis; 5-aminolevulinate from L-glutamyl-tRNA(Glu): step 2/2.</text>
</comment>
<comment type="subunit">
    <text evidence="1">Homodimer.</text>
</comment>
<comment type="subcellular location">
    <subcellularLocation>
        <location evidence="1">Cytoplasm</location>
    </subcellularLocation>
</comment>
<comment type="similarity">
    <text evidence="1">Belongs to the class-III pyridoxal-phosphate-dependent aminotransferase family. HemL subfamily.</text>
</comment>
<reference key="1">
    <citation type="journal article" date="2000" name="Science">
        <title>Complete genome sequence of Neisseria meningitidis serogroup B strain MC58.</title>
        <authorList>
            <person name="Tettelin H."/>
            <person name="Saunders N.J."/>
            <person name="Heidelberg J.F."/>
            <person name="Jeffries A.C."/>
            <person name="Nelson K.E."/>
            <person name="Eisen J.A."/>
            <person name="Ketchum K.A."/>
            <person name="Hood D.W."/>
            <person name="Peden J.F."/>
            <person name="Dodson R.J."/>
            <person name="Nelson W.C."/>
            <person name="Gwinn M.L."/>
            <person name="DeBoy R.T."/>
            <person name="Peterson J.D."/>
            <person name="Hickey E.K."/>
            <person name="Haft D.H."/>
            <person name="Salzberg S.L."/>
            <person name="White O."/>
            <person name="Fleischmann R.D."/>
            <person name="Dougherty B.A."/>
            <person name="Mason T.M."/>
            <person name="Ciecko A."/>
            <person name="Parksey D.S."/>
            <person name="Blair E."/>
            <person name="Cittone H."/>
            <person name="Clark E.B."/>
            <person name="Cotton M.D."/>
            <person name="Utterback T.R."/>
            <person name="Khouri H.M."/>
            <person name="Qin H."/>
            <person name="Vamathevan J.J."/>
            <person name="Gill J."/>
            <person name="Scarlato V."/>
            <person name="Masignani V."/>
            <person name="Pizza M."/>
            <person name="Grandi G."/>
            <person name="Sun L."/>
            <person name="Smith H.O."/>
            <person name="Fraser C.M."/>
            <person name="Moxon E.R."/>
            <person name="Rappuoli R."/>
            <person name="Venter J.C."/>
        </authorList>
    </citation>
    <scope>NUCLEOTIDE SEQUENCE [LARGE SCALE GENOMIC DNA]</scope>
    <source>
        <strain>ATCC BAA-335 / MC58</strain>
    </source>
</reference>
<evidence type="ECO:0000255" key="1">
    <source>
        <dbReference type="HAMAP-Rule" id="MF_00375"/>
    </source>
</evidence>
<keyword id="KW-0963">Cytoplasm</keyword>
<keyword id="KW-0413">Isomerase</keyword>
<keyword id="KW-0627">Porphyrin biosynthesis</keyword>
<keyword id="KW-0663">Pyridoxal phosphate</keyword>
<keyword id="KW-1185">Reference proteome</keyword>
<accession>Q9JXW0</accession>
<dbReference type="EC" id="5.4.3.8" evidence="1"/>
<dbReference type="EMBL" id="AE002098">
    <property type="protein sequence ID" value="AAF42198.1"/>
    <property type="molecule type" value="Genomic_DNA"/>
</dbReference>
<dbReference type="PIR" id="A81034">
    <property type="entry name" value="A81034"/>
</dbReference>
<dbReference type="RefSeq" id="NP_274860.1">
    <property type="nucleotide sequence ID" value="NC_003112.2"/>
</dbReference>
<dbReference type="RefSeq" id="WP_002223025.1">
    <property type="nucleotide sequence ID" value="NC_003112.2"/>
</dbReference>
<dbReference type="SMR" id="Q9JXW0"/>
<dbReference type="FunCoup" id="Q9JXW0">
    <property type="interactions" value="526"/>
</dbReference>
<dbReference type="STRING" id="122586.NMB1864"/>
<dbReference type="PaxDb" id="122586-NMB1864"/>
<dbReference type="KEGG" id="nme:NMB1864"/>
<dbReference type="PATRIC" id="fig|122586.8.peg.2383"/>
<dbReference type="HOGENOM" id="CLU_016922_1_5_4"/>
<dbReference type="InParanoid" id="Q9JXW0"/>
<dbReference type="OrthoDB" id="3398487at2"/>
<dbReference type="UniPathway" id="UPA00251">
    <property type="reaction ID" value="UER00317"/>
</dbReference>
<dbReference type="Proteomes" id="UP000000425">
    <property type="component" value="Chromosome"/>
</dbReference>
<dbReference type="GO" id="GO:0005737">
    <property type="term" value="C:cytoplasm"/>
    <property type="evidence" value="ECO:0007669"/>
    <property type="project" value="UniProtKB-SubCell"/>
</dbReference>
<dbReference type="GO" id="GO:0042286">
    <property type="term" value="F:glutamate-1-semialdehyde 2,1-aminomutase activity"/>
    <property type="evidence" value="ECO:0007669"/>
    <property type="project" value="UniProtKB-UniRule"/>
</dbReference>
<dbReference type="GO" id="GO:0030170">
    <property type="term" value="F:pyridoxal phosphate binding"/>
    <property type="evidence" value="ECO:0007669"/>
    <property type="project" value="InterPro"/>
</dbReference>
<dbReference type="GO" id="GO:0008483">
    <property type="term" value="F:transaminase activity"/>
    <property type="evidence" value="ECO:0007669"/>
    <property type="project" value="InterPro"/>
</dbReference>
<dbReference type="GO" id="GO:0006782">
    <property type="term" value="P:protoporphyrinogen IX biosynthetic process"/>
    <property type="evidence" value="ECO:0007669"/>
    <property type="project" value="UniProtKB-UniRule"/>
</dbReference>
<dbReference type="CDD" id="cd00610">
    <property type="entry name" value="OAT_like"/>
    <property type="match status" value="1"/>
</dbReference>
<dbReference type="FunFam" id="3.40.640.10:FF:000021">
    <property type="entry name" value="Glutamate-1-semialdehyde 2,1-aminomutase"/>
    <property type="match status" value="1"/>
</dbReference>
<dbReference type="Gene3D" id="3.90.1150.10">
    <property type="entry name" value="Aspartate Aminotransferase, domain 1"/>
    <property type="match status" value="1"/>
</dbReference>
<dbReference type="Gene3D" id="3.40.640.10">
    <property type="entry name" value="Type I PLP-dependent aspartate aminotransferase-like (Major domain)"/>
    <property type="match status" value="1"/>
</dbReference>
<dbReference type="HAMAP" id="MF_00375">
    <property type="entry name" value="HemL_aminotrans_3"/>
    <property type="match status" value="1"/>
</dbReference>
<dbReference type="InterPro" id="IPR004639">
    <property type="entry name" value="4pyrrol_synth_GluAld_NH2Trfase"/>
</dbReference>
<dbReference type="InterPro" id="IPR005814">
    <property type="entry name" value="Aminotrans_3"/>
</dbReference>
<dbReference type="InterPro" id="IPR049704">
    <property type="entry name" value="Aminotrans_3_PPA_site"/>
</dbReference>
<dbReference type="InterPro" id="IPR015424">
    <property type="entry name" value="PyrdxlP-dep_Trfase"/>
</dbReference>
<dbReference type="InterPro" id="IPR015421">
    <property type="entry name" value="PyrdxlP-dep_Trfase_major"/>
</dbReference>
<dbReference type="InterPro" id="IPR015422">
    <property type="entry name" value="PyrdxlP-dep_Trfase_small"/>
</dbReference>
<dbReference type="NCBIfam" id="TIGR00713">
    <property type="entry name" value="hemL"/>
    <property type="match status" value="1"/>
</dbReference>
<dbReference type="NCBIfam" id="NF000818">
    <property type="entry name" value="PRK00062.1"/>
    <property type="match status" value="1"/>
</dbReference>
<dbReference type="PANTHER" id="PTHR43713">
    <property type="entry name" value="GLUTAMATE-1-SEMIALDEHYDE 2,1-AMINOMUTASE"/>
    <property type="match status" value="1"/>
</dbReference>
<dbReference type="PANTHER" id="PTHR43713:SF3">
    <property type="entry name" value="GLUTAMATE-1-SEMIALDEHYDE 2,1-AMINOMUTASE 1, CHLOROPLASTIC-RELATED"/>
    <property type="match status" value="1"/>
</dbReference>
<dbReference type="Pfam" id="PF00202">
    <property type="entry name" value="Aminotran_3"/>
    <property type="match status" value="1"/>
</dbReference>
<dbReference type="SUPFAM" id="SSF53383">
    <property type="entry name" value="PLP-dependent transferases"/>
    <property type="match status" value="1"/>
</dbReference>
<dbReference type="PROSITE" id="PS00600">
    <property type="entry name" value="AA_TRANSFER_CLASS_3"/>
    <property type="match status" value="1"/>
</dbReference>